<comment type="function">
    <text evidence="1">Essential role in pre-mRNA splicing. Also essential for entry into mitosis (G2/M progression) as well as for chromosome segregation during mitosis (By similarity).</text>
</comment>
<comment type="subunit">
    <text evidence="1">Component of the 25S [U4/U6.U5] tri-snRNP.</text>
</comment>
<comment type="subcellular location">
    <subcellularLocation>
        <location evidence="1">Nucleus</location>
    </subcellularLocation>
</comment>
<comment type="similarity">
    <text evidence="2">Belongs to the DIM1 family.</text>
</comment>
<name>DIB1_CANGA</name>
<feature type="chain" id="PRO_0000218284" description="Spliceosomal protein DIB1">
    <location>
        <begin position="1"/>
        <end position="142"/>
    </location>
</feature>
<accession>Q6FMI2</accession>
<organism>
    <name type="scientific">Candida glabrata (strain ATCC 2001 / BCRC 20586 / JCM 3761 / NBRC 0622 / NRRL Y-65 / CBS 138)</name>
    <name type="common">Yeast</name>
    <name type="synonym">Nakaseomyces glabratus</name>
    <dbReference type="NCBI Taxonomy" id="284593"/>
    <lineage>
        <taxon>Eukaryota</taxon>
        <taxon>Fungi</taxon>
        <taxon>Dikarya</taxon>
        <taxon>Ascomycota</taxon>
        <taxon>Saccharomycotina</taxon>
        <taxon>Saccharomycetes</taxon>
        <taxon>Saccharomycetales</taxon>
        <taxon>Saccharomycetaceae</taxon>
        <taxon>Nakaseomyces</taxon>
    </lineage>
</organism>
<proteinExistence type="inferred from homology"/>
<protein>
    <recommendedName>
        <fullName>Spliceosomal protein DIB1</fullName>
    </recommendedName>
</protein>
<reference key="1">
    <citation type="journal article" date="2004" name="Nature">
        <title>Genome evolution in yeasts.</title>
        <authorList>
            <person name="Dujon B."/>
            <person name="Sherman D."/>
            <person name="Fischer G."/>
            <person name="Durrens P."/>
            <person name="Casaregola S."/>
            <person name="Lafontaine I."/>
            <person name="de Montigny J."/>
            <person name="Marck C."/>
            <person name="Neuveglise C."/>
            <person name="Talla E."/>
            <person name="Goffard N."/>
            <person name="Frangeul L."/>
            <person name="Aigle M."/>
            <person name="Anthouard V."/>
            <person name="Babour A."/>
            <person name="Barbe V."/>
            <person name="Barnay S."/>
            <person name="Blanchin S."/>
            <person name="Beckerich J.-M."/>
            <person name="Beyne E."/>
            <person name="Bleykasten C."/>
            <person name="Boisrame A."/>
            <person name="Boyer J."/>
            <person name="Cattolico L."/>
            <person name="Confanioleri F."/>
            <person name="de Daruvar A."/>
            <person name="Despons L."/>
            <person name="Fabre E."/>
            <person name="Fairhead C."/>
            <person name="Ferry-Dumazet H."/>
            <person name="Groppi A."/>
            <person name="Hantraye F."/>
            <person name="Hennequin C."/>
            <person name="Jauniaux N."/>
            <person name="Joyet P."/>
            <person name="Kachouri R."/>
            <person name="Kerrest A."/>
            <person name="Koszul R."/>
            <person name="Lemaire M."/>
            <person name="Lesur I."/>
            <person name="Ma L."/>
            <person name="Muller H."/>
            <person name="Nicaud J.-M."/>
            <person name="Nikolski M."/>
            <person name="Oztas S."/>
            <person name="Ozier-Kalogeropoulos O."/>
            <person name="Pellenz S."/>
            <person name="Potier S."/>
            <person name="Richard G.-F."/>
            <person name="Straub M.-L."/>
            <person name="Suleau A."/>
            <person name="Swennen D."/>
            <person name="Tekaia F."/>
            <person name="Wesolowski-Louvel M."/>
            <person name="Westhof E."/>
            <person name="Wirth B."/>
            <person name="Zeniou-Meyer M."/>
            <person name="Zivanovic Y."/>
            <person name="Bolotin-Fukuhara M."/>
            <person name="Thierry A."/>
            <person name="Bouchier C."/>
            <person name="Caudron B."/>
            <person name="Scarpelli C."/>
            <person name="Gaillardin C."/>
            <person name="Weissenbach J."/>
            <person name="Wincker P."/>
            <person name="Souciet J.-L."/>
        </authorList>
    </citation>
    <scope>NUCLEOTIDE SEQUENCE [LARGE SCALE GENOMIC DNA]</scope>
    <source>
        <strain>ATCC 2001 / BCRC 20586 / JCM 3761 / NBRC 0622 / NRRL Y-65 / CBS 138</strain>
    </source>
</reference>
<keyword id="KW-0131">Cell cycle</keyword>
<keyword id="KW-0132">Cell division</keyword>
<keyword id="KW-0498">Mitosis</keyword>
<keyword id="KW-0507">mRNA processing</keyword>
<keyword id="KW-0508">mRNA splicing</keyword>
<keyword id="KW-0539">Nucleus</keyword>
<keyword id="KW-1185">Reference proteome</keyword>
<sequence length="142" mass="16768">MEFLYNLHSGWHVDQAIVTEEERLVVVRFGRTADRECMLMDEMLASVAEKVRNFVAIYLCDIDEVPDFNDMYELNDNMCLMFFYKNKHMMCDFGTGNNNKMNFLPDDKQELIDIMETIFRGARKNKGIVVSPYDYNHKRPSD</sequence>
<gene>
    <name type="primary">DIB1</name>
    <name type="ordered locus">CAGL0K07854g</name>
</gene>
<evidence type="ECO:0000250" key="1"/>
<evidence type="ECO:0000305" key="2"/>
<dbReference type="EMBL" id="CR380957">
    <property type="protein sequence ID" value="CAG61525.1"/>
    <property type="molecule type" value="Genomic_DNA"/>
</dbReference>
<dbReference type="RefSeq" id="XP_448562.1">
    <property type="nucleotide sequence ID" value="XM_448562.1"/>
</dbReference>
<dbReference type="SMR" id="Q6FMI2"/>
<dbReference type="FunCoup" id="Q6FMI2">
    <property type="interactions" value="994"/>
</dbReference>
<dbReference type="STRING" id="284593.Q6FMI2"/>
<dbReference type="EnsemblFungi" id="CAGL0K07854g-T">
    <property type="protein sequence ID" value="CAGL0K07854g-T-p1"/>
    <property type="gene ID" value="CAGL0K07854g"/>
</dbReference>
<dbReference type="KEGG" id="cgr:2890364"/>
<dbReference type="CGD" id="CAL0134201">
    <property type="gene designation" value="CAGL0K07854g"/>
</dbReference>
<dbReference type="VEuPathDB" id="FungiDB:B1J91_K07854g"/>
<dbReference type="VEuPathDB" id="FungiDB:CAGL0K07854g"/>
<dbReference type="eggNOG" id="KOG3414">
    <property type="taxonomic scope" value="Eukaryota"/>
</dbReference>
<dbReference type="HOGENOM" id="CLU_117348_0_0_1"/>
<dbReference type="InParanoid" id="Q6FMI2"/>
<dbReference type="OMA" id="GMYELYD"/>
<dbReference type="Proteomes" id="UP000002428">
    <property type="component" value="Chromosome K"/>
</dbReference>
<dbReference type="GO" id="GO:0005681">
    <property type="term" value="C:spliceosomal complex"/>
    <property type="evidence" value="ECO:0007669"/>
    <property type="project" value="TreeGrafter"/>
</dbReference>
<dbReference type="GO" id="GO:0046540">
    <property type="term" value="C:U4/U6 x U5 tri-snRNP complex"/>
    <property type="evidence" value="ECO:0007669"/>
    <property type="project" value="EnsemblFungi"/>
</dbReference>
<dbReference type="GO" id="GO:0005682">
    <property type="term" value="C:U5 snRNP"/>
    <property type="evidence" value="ECO:0007669"/>
    <property type="project" value="EnsemblFungi"/>
</dbReference>
<dbReference type="GO" id="GO:0051301">
    <property type="term" value="P:cell division"/>
    <property type="evidence" value="ECO:0007669"/>
    <property type="project" value="UniProtKB-KW"/>
</dbReference>
<dbReference type="GO" id="GO:0000398">
    <property type="term" value="P:mRNA splicing, via spliceosome"/>
    <property type="evidence" value="ECO:0007669"/>
    <property type="project" value="EnsemblFungi"/>
</dbReference>
<dbReference type="CDD" id="cd02954">
    <property type="entry name" value="DIM1"/>
    <property type="match status" value="1"/>
</dbReference>
<dbReference type="FunFam" id="3.40.30.10:FF:000004">
    <property type="entry name" value="Spliceosomal protein DIB1"/>
    <property type="match status" value="1"/>
</dbReference>
<dbReference type="Gene3D" id="3.40.30.10">
    <property type="entry name" value="Glutaredoxin"/>
    <property type="match status" value="1"/>
</dbReference>
<dbReference type="InterPro" id="IPR004123">
    <property type="entry name" value="Dim1"/>
</dbReference>
<dbReference type="InterPro" id="IPR036249">
    <property type="entry name" value="Thioredoxin-like_sf"/>
</dbReference>
<dbReference type="PANTHER" id="PTHR12052:SF5">
    <property type="entry name" value="THIOREDOXIN-LIKE PROTEIN 4A"/>
    <property type="match status" value="1"/>
</dbReference>
<dbReference type="PANTHER" id="PTHR12052">
    <property type="entry name" value="THIOREDOXIN-LIKE PROTEN 4A, 4B"/>
    <property type="match status" value="1"/>
</dbReference>
<dbReference type="Pfam" id="PF02966">
    <property type="entry name" value="DIM1"/>
    <property type="match status" value="1"/>
</dbReference>
<dbReference type="PIRSF" id="PIRSF017199">
    <property type="entry name" value="mRNA_splic_U5"/>
    <property type="match status" value="1"/>
</dbReference>
<dbReference type="SMART" id="SM01410">
    <property type="entry name" value="DIM1"/>
    <property type="match status" value="1"/>
</dbReference>
<dbReference type="SUPFAM" id="SSF52833">
    <property type="entry name" value="Thioredoxin-like"/>
    <property type="match status" value="1"/>
</dbReference>